<accession>B9KEE2</accession>
<comment type="function">
    <text evidence="1">One of the early assembly proteins it binds 23S rRNA. One of the proteins that surrounds the polypeptide exit tunnel on the outside of the ribosome. Forms the main docking site for trigger factor binding to the ribosome.</text>
</comment>
<comment type="subunit">
    <text evidence="1">Part of the 50S ribosomal subunit. Contacts protein L29, and trigger factor when it is bound to the ribosome.</text>
</comment>
<comment type="similarity">
    <text evidence="1">Belongs to the universal ribosomal protein uL23 family.</text>
</comment>
<protein>
    <recommendedName>
        <fullName evidence="1">Large ribosomal subunit protein uL23</fullName>
    </recommendedName>
    <alternativeName>
        <fullName evidence="2">50S ribosomal protein L23</fullName>
    </alternativeName>
</protein>
<keyword id="KW-1185">Reference proteome</keyword>
<keyword id="KW-0687">Ribonucleoprotein</keyword>
<keyword id="KW-0689">Ribosomal protein</keyword>
<keyword id="KW-0694">RNA-binding</keyword>
<keyword id="KW-0699">rRNA-binding</keyword>
<name>RL23_CAMLR</name>
<gene>
    <name evidence="1" type="primary">rplW</name>
    <name type="ordered locus">Cla_0061</name>
</gene>
<evidence type="ECO:0000255" key="1">
    <source>
        <dbReference type="HAMAP-Rule" id="MF_01369"/>
    </source>
</evidence>
<evidence type="ECO:0000305" key="2"/>
<organism>
    <name type="scientific">Campylobacter lari (strain RM2100 / D67 / ATCC BAA-1060)</name>
    <dbReference type="NCBI Taxonomy" id="306263"/>
    <lineage>
        <taxon>Bacteria</taxon>
        <taxon>Pseudomonadati</taxon>
        <taxon>Campylobacterota</taxon>
        <taxon>Epsilonproteobacteria</taxon>
        <taxon>Campylobacterales</taxon>
        <taxon>Campylobacteraceae</taxon>
        <taxon>Campylobacter</taxon>
    </lineage>
</organism>
<reference key="1">
    <citation type="journal article" date="2008" name="Foodborne Pathog. Dis.">
        <title>The complete genome sequence and analysis of the human pathogen Campylobacter lari.</title>
        <authorList>
            <person name="Miller W.G."/>
            <person name="Wang G."/>
            <person name="Binnewies T.T."/>
            <person name="Parker C.T."/>
        </authorList>
    </citation>
    <scope>NUCLEOTIDE SEQUENCE [LARGE SCALE GENOMIC DNA]</scope>
    <source>
        <strain>RM2100 / D67 / ATCC BAA-1060</strain>
    </source>
</reference>
<sequence>MADITDIKTILYTEKSLNLQEQGVVVIQTSPKMTKNGLKEVLREYFGVTPVRINSLKMDGKIKRFRGREGQRNSFKKFYVKLPEGVSLESSEA</sequence>
<dbReference type="EMBL" id="CP000932">
    <property type="protein sequence ID" value="ACM63427.1"/>
    <property type="molecule type" value="Genomic_DNA"/>
</dbReference>
<dbReference type="RefSeq" id="WP_012660813.1">
    <property type="nucleotide sequence ID" value="NC_012039.1"/>
</dbReference>
<dbReference type="SMR" id="B9KEE2"/>
<dbReference type="STRING" id="306263.Cla_0061"/>
<dbReference type="KEGG" id="cla:CLA_0061"/>
<dbReference type="PATRIC" id="fig|306263.5.peg.60"/>
<dbReference type="eggNOG" id="COG0089">
    <property type="taxonomic scope" value="Bacteria"/>
</dbReference>
<dbReference type="HOGENOM" id="CLU_037562_3_1_7"/>
<dbReference type="Proteomes" id="UP000007727">
    <property type="component" value="Chromosome"/>
</dbReference>
<dbReference type="GO" id="GO:1990904">
    <property type="term" value="C:ribonucleoprotein complex"/>
    <property type="evidence" value="ECO:0007669"/>
    <property type="project" value="UniProtKB-KW"/>
</dbReference>
<dbReference type="GO" id="GO:0005840">
    <property type="term" value="C:ribosome"/>
    <property type="evidence" value="ECO:0007669"/>
    <property type="project" value="UniProtKB-KW"/>
</dbReference>
<dbReference type="GO" id="GO:0019843">
    <property type="term" value="F:rRNA binding"/>
    <property type="evidence" value="ECO:0007669"/>
    <property type="project" value="UniProtKB-UniRule"/>
</dbReference>
<dbReference type="GO" id="GO:0003735">
    <property type="term" value="F:structural constituent of ribosome"/>
    <property type="evidence" value="ECO:0007669"/>
    <property type="project" value="InterPro"/>
</dbReference>
<dbReference type="GO" id="GO:0006412">
    <property type="term" value="P:translation"/>
    <property type="evidence" value="ECO:0007669"/>
    <property type="project" value="UniProtKB-UniRule"/>
</dbReference>
<dbReference type="Gene3D" id="3.30.70.330">
    <property type="match status" value="1"/>
</dbReference>
<dbReference type="HAMAP" id="MF_01369_B">
    <property type="entry name" value="Ribosomal_uL23_B"/>
    <property type="match status" value="1"/>
</dbReference>
<dbReference type="InterPro" id="IPR012677">
    <property type="entry name" value="Nucleotide-bd_a/b_plait_sf"/>
</dbReference>
<dbReference type="InterPro" id="IPR013025">
    <property type="entry name" value="Ribosomal_uL23-like"/>
</dbReference>
<dbReference type="InterPro" id="IPR012678">
    <property type="entry name" value="Ribosomal_uL23/eL15/eS24_sf"/>
</dbReference>
<dbReference type="NCBIfam" id="NF004362">
    <property type="entry name" value="PRK05738.2-2"/>
    <property type="match status" value="1"/>
</dbReference>
<dbReference type="Pfam" id="PF00276">
    <property type="entry name" value="Ribosomal_L23"/>
    <property type="match status" value="1"/>
</dbReference>
<dbReference type="SUPFAM" id="SSF54189">
    <property type="entry name" value="Ribosomal proteins S24e, L23 and L15e"/>
    <property type="match status" value="1"/>
</dbReference>
<proteinExistence type="inferred from homology"/>
<feature type="chain" id="PRO_1000184072" description="Large ribosomal subunit protein uL23">
    <location>
        <begin position="1"/>
        <end position="93"/>
    </location>
</feature>